<dbReference type="EMBL" id="U05875">
    <property type="protein sequence ID" value="AAA16955.1"/>
    <property type="molecule type" value="mRNA"/>
</dbReference>
<dbReference type="EMBL" id="U05877">
    <property type="protein sequence ID" value="AAA16956.1"/>
    <property type="molecule type" value="mRNA"/>
</dbReference>
<dbReference type="EMBL" id="AY644470">
    <property type="protein sequence ID" value="AAT45458.1"/>
    <property type="molecule type" value="Genomic_DNA"/>
</dbReference>
<dbReference type="EMBL" id="BC003624">
    <property type="protein sequence ID" value="AAH03624.1"/>
    <property type="molecule type" value="mRNA"/>
</dbReference>
<dbReference type="EMBL" id="U68755">
    <property type="protein sequence ID" value="AAC52066.1"/>
    <property type="molecule type" value="Genomic_DNA"/>
</dbReference>
<dbReference type="CCDS" id="CCDS33544.1"/>
<dbReference type="PIR" id="I38500">
    <property type="entry name" value="I38500"/>
</dbReference>
<dbReference type="RefSeq" id="NP_005525.2">
    <property type="nucleotide sequence ID" value="NM_005534.3"/>
</dbReference>
<dbReference type="PDB" id="5EH1">
    <property type="method" value="X-ray"/>
    <property type="resolution" value="1.80 A"/>
    <property type="chains" value="A=28-247"/>
</dbReference>
<dbReference type="PDB" id="6E3K">
    <property type="method" value="X-ray"/>
    <property type="resolution" value="3.25 A"/>
    <property type="chains" value="E/I=28-247"/>
</dbReference>
<dbReference type="PDB" id="6E3L">
    <property type="method" value="X-ray"/>
    <property type="resolution" value="3.80 A"/>
    <property type="chains" value="E/I=28-247"/>
</dbReference>
<dbReference type="PDBsum" id="5EH1"/>
<dbReference type="PDBsum" id="6E3K"/>
<dbReference type="PDBsum" id="6E3L"/>
<dbReference type="SMR" id="P38484"/>
<dbReference type="BioGRID" id="109682">
    <property type="interactions" value="60"/>
</dbReference>
<dbReference type="ComplexPortal" id="CPX-6015">
    <property type="entry name" value="Interferon gamma receptor-ligand complex"/>
</dbReference>
<dbReference type="CORUM" id="P38484"/>
<dbReference type="FunCoup" id="P38484">
    <property type="interactions" value="968"/>
</dbReference>
<dbReference type="IntAct" id="P38484">
    <property type="interactions" value="56"/>
</dbReference>
<dbReference type="STRING" id="9606.ENSP00000371425"/>
<dbReference type="ChEMBL" id="CHEMBL2364171"/>
<dbReference type="DrugBank" id="DB00033">
    <property type="generic name" value="Interferon gamma-1b"/>
</dbReference>
<dbReference type="GlyCosmos" id="P38484">
    <property type="glycosylation" value="6 sites, No reported glycans"/>
</dbReference>
<dbReference type="GlyGen" id="P38484">
    <property type="glycosylation" value="7 sites, 3 N-linked glycans (2 sites)"/>
</dbReference>
<dbReference type="iPTMnet" id="P38484"/>
<dbReference type="PhosphoSitePlus" id="P38484"/>
<dbReference type="BioMuta" id="IFNGR2"/>
<dbReference type="DMDM" id="145559548"/>
<dbReference type="jPOST" id="P38484"/>
<dbReference type="MassIVE" id="P38484"/>
<dbReference type="PaxDb" id="9606-ENSP00000290219"/>
<dbReference type="PeptideAtlas" id="P38484"/>
<dbReference type="Antibodypedia" id="703">
    <property type="antibodies" value="444 antibodies from 33 providers"/>
</dbReference>
<dbReference type="DNASU" id="3460"/>
<dbReference type="Ensembl" id="ENST00000290219.11">
    <property type="protein sequence ID" value="ENSP00000290219.5"/>
    <property type="gene ID" value="ENSG00000159128.16"/>
</dbReference>
<dbReference type="Ensembl" id="ENST00000576463.5">
    <property type="protein sequence ID" value="ENSP00000458487.2"/>
    <property type="gene ID" value="ENSG00000262795.5"/>
</dbReference>
<dbReference type="GeneID" id="3460"/>
<dbReference type="KEGG" id="hsa:3460"/>
<dbReference type="MANE-Select" id="ENST00000290219.11">
    <property type="protein sequence ID" value="ENSP00000290219.5"/>
    <property type="RefSeq nucleotide sequence ID" value="NM_005534.4"/>
    <property type="RefSeq protein sequence ID" value="NP_005525.2"/>
</dbReference>
<dbReference type="UCSC" id="uc002yrp.4">
    <property type="organism name" value="human"/>
</dbReference>
<dbReference type="AGR" id="HGNC:5440"/>
<dbReference type="CTD" id="3460"/>
<dbReference type="DisGeNET" id="3460"/>
<dbReference type="GeneCards" id="IFNGR2"/>
<dbReference type="HGNC" id="HGNC:5440">
    <property type="gene designation" value="IFNGR2"/>
</dbReference>
<dbReference type="HPA" id="ENSG00000159128">
    <property type="expression patterns" value="Low tissue specificity"/>
</dbReference>
<dbReference type="MalaCards" id="IFNGR2"/>
<dbReference type="MIM" id="147569">
    <property type="type" value="gene"/>
</dbReference>
<dbReference type="MIM" id="614889">
    <property type="type" value="phenotype"/>
</dbReference>
<dbReference type="neXtProt" id="NX_P38484"/>
<dbReference type="OpenTargets" id="ENSG00000159128"/>
<dbReference type="Orphanet" id="319589">
    <property type="disease" value="Autosomal dominant mendelian susceptibility to mycobacterial diseases due to partial IFNgammaR2 deficiency"/>
</dbReference>
<dbReference type="Orphanet" id="319574">
    <property type="disease" value="Autosomal recessive mendelian susceptibility to mycobacterial diseases due to partial IFNgammaR2 deficiency"/>
</dbReference>
<dbReference type="Orphanet" id="319547">
    <property type="disease" value="Mendelian susceptibility to mycobacterial diseases due to complete IFNgammaR2 deficiency"/>
</dbReference>
<dbReference type="PharmGKB" id="PA29676"/>
<dbReference type="VEuPathDB" id="HostDB:ENSG00000159128"/>
<dbReference type="eggNOG" id="ENOG502S6E7">
    <property type="taxonomic scope" value="Eukaryota"/>
</dbReference>
<dbReference type="GeneTree" id="ENSGT00940000160503"/>
<dbReference type="InParanoid" id="P38484"/>
<dbReference type="OMA" id="WATVPWF"/>
<dbReference type="OrthoDB" id="9932619at2759"/>
<dbReference type="PAN-GO" id="P38484">
    <property type="GO annotations" value="3 GO annotations based on evolutionary models"/>
</dbReference>
<dbReference type="PhylomeDB" id="P38484"/>
<dbReference type="TreeFam" id="TF337223"/>
<dbReference type="PathwayCommons" id="P38484"/>
<dbReference type="Reactome" id="R-HSA-877300">
    <property type="pathway name" value="Interferon gamma signaling"/>
</dbReference>
<dbReference type="Reactome" id="R-HSA-877312">
    <property type="pathway name" value="Regulation of IFNG signaling"/>
</dbReference>
<dbReference type="Reactome" id="R-HSA-9679191">
    <property type="pathway name" value="Potential therapeutics for SARS"/>
</dbReference>
<dbReference type="Reactome" id="R-HSA-9732724">
    <property type="pathway name" value="IFNG signaling activates MAPKs"/>
</dbReference>
<dbReference type="SignaLink" id="P38484"/>
<dbReference type="SIGNOR" id="P38484"/>
<dbReference type="BioGRID-ORCS" id="3460">
    <property type="hits" value="31 hits in 1178 CRISPR screens"/>
</dbReference>
<dbReference type="ChiTaRS" id="IFNGR2">
    <property type="organism name" value="human"/>
</dbReference>
<dbReference type="GenomeRNAi" id="3460"/>
<dbReference type="Pharos" id="P38484">
    <property type="development level" value="Tbio"/>
</dbReference>
<dbReference type="PRO" id="PR:P38484"/>
<dbReference type="Proteomes" id="UP000005640">
    <property type="component" value="Chromosome 21"/>
</dbReference>
<dbReference type="RNAct" id="P38484">
    <property type="molecule type" value="protein"/>
</dbReference>
<dbReference type="Bgee" id="ENSG00000159128">
    <property type="expression patterns" value="Expressed in monocyte and 98 other cell types or tissues"/>
</dbReference>
<dbReference type="ExpressionAtlas" id="P38484">
    <property type="expression patterns" value="baseline and differential"/>
</dbReference>
<dbReference type="GO" id="GO:0030659">
    <property type="term" value="C:cytoplasmic vesicle membrane"/>
    <property type="evidence" value="ECO:0007669"/>
    <property type="project" value="UniProtKB-SubCell"/>
</dbReference>
<dbReference type="GO" id="GO:0005783">
    <property type="term" value="C:endoplasmic reticulum"/>
    <property type="evidence" value="ECO:0007005"/>
    <property type="project" value="UniProtKB"/>
</dbReference>
<dbReference type="GO" id="GO:0005789">
    <property type="term" value="C:endoplasmic reticulum membrane"/>
    <property type="evidence" value="ECO:0007669"/>
    <property type="project" value="UniProtKB-SubCell"/>
</dbReference>
<dbReference type="GO" id="GO:0000139">
    <property type="term" value="C:Golgi membrane"/>
    <property type="evidence" value="ECO:0007669"/>
    <property type="project" value="UniProtKB-SubCell"/>
</dbReference>
<dbReference type="GO" id="GO:0005886">
    <property type="term" value="C:plasma membrane"/>
    <property type="evidence" value="ECO:0000314"/>
    <property type="project" value="UniProt"/>
</dbReference>
<dbReference type="GO" id="GO:0004896">
    <property type="term" value="F:cytokine receptor activity"/>
    <property type="evidence" value="ECO:0000318"/>
    <property type="project" value="GO_Central"/>
</dbReference>
<dbReference type="GO" id="GO:0004906">
    <property type="term" value="F:type II interferon receptor activity"/>
    <property type="evidence" value="ECO:0000314"/>
    <property type="project" value="UniProt"/>
</dbReference>
<dbReference type="GO" id="GO:0007166">
    <property type="term" value="P:cell surface receptor signaling pathway"/>
    <property type="evidence" value="ECO:0000304"/>
    <property type="project" value="ProtInc"/>
</dbReference>
<dbReference type="GO" id="GO:0098586">
    <property type="term" value="P:cellular response to virus"/>
    <property type="evidence" value="ECO:0000303"/>
    <property type="project" value="ComplexPortal"/>
</dbReference>
<dbReference type="GO" id="GO:0019221">
    <property type="term" value="P:cytokine-mediated signaling pathway"/>
    <property type="evidence" value="ECO:0000318"/>
    <property type="project" value="GO_Central"/>
</dbReference>
<dbReference type="GO" id="GO:0051607">
    <property type="term" value="P:defense response to virus"/>
    <property type="evidence" value="ECO:0007669"/>
    <property type="project" value="Ensembl"/>
</dbReference>
<dbReference type="GO" id="GO:0001774">
    <property type="term" value="P:microglial cell activation"/>
    <property type="evidence" value="ECO:0007669"/>
    <property type="project" value="Ensembl"/>
</dbReference>
<dbReference type="GO" id="GO:1900451">
    <property type="term" value="P:positive regulation of glutamate receptor signaling pathway"/>
    <property type="evidence" value="ECO:0007669"/>
    <property type="project" value="Ensembl"/>
</dbReference>
<dbReference type="GO" id="GO:0009615">
    <property type="term" value="P:response to virus"/>
    <property type="evidence" value="ECO:0000304"/>
    <property type="project" value="ProtInc"/>
</dbReference>
<dbReference type="GO" id="GO:0060333">
    <property type="term" value="P:type II interferon-mediated signaling pathway"/>
    <property type="evidence" value="ECO:0000303"/>
    <property type="project" value="ComplexPortal"/>
</dbReference>
<dbReference type="GO" id="GO:0038196">
    <property type="term" value="P:type III interferon-mediated signaling pathway"/>
    <property type="evidence" value="ECO:0000314"/>
    <property type="project" value="UniProt"/>
</dbReference>
<dbReference type="CDD" id="cd00063">
    <property type="entry name" value="FN3"/>
    <property type="match status" value="1"/>
</dbReference>
<dbReference type="FunFam" id="2.60.40.10:FF:000957">
    <property type="entry name" value="Interferon gamma receptor 2"/>
    <property type="match status" value="1"/>
</dbReference>
<dbReference type="FunFam" id="2.60.40.10:FF:001281">
    <property type="entry name" value="Interferon gamma receptor 2"/>
    <property type="match status" value="1"/>
</dbReference>
<dbReference type="Gene3D" id="2.60.40.10">
    <property type="entry name" value="Immunoglobulins"/>
    <property type="match status" value="2"/>
</dbReference>
<dbReference type="InterPro" id="IPR003961">
    <property type="entry name" value="FN3_dom"/>
</dbReference>
<dbReference type="InterPro" id="IPR036116">
    <property type="entry name" value="FN3_sf"/>
</dbReference>
<dbReference type="InterPro" id="IPR013783">
    <property type="entry name" value="Ig-like_fold"/>
</dbReference>
<dbReference type="InterPro" id="IPR015373">
    <property type="entry name" value="Interferon/interleukin_rcp_dom"/>
</dbReference>
<dbReference type="InterPro" id="IPR050650">
    <property type="entry name" value="Type-II_Cytokine-TF_Rcpt"/>
</dbReference>
<dbReference type="PANTHER" id="PTHR20859:SF46">
    <property type="entry name" value="INTERFERON GAMMA RECEPTOR 2"/>
    <property type="match status" value="1"/>
</dbReference>
<dbReference type="PANTHER" id="PTHR20859">
    <property type="entry name" value="INTERFERON/INTERLEUKIN RECEPTOR"/>
    <property type="match status" value="1"/>
</dbReference>
<dbReference type="Pfam" id="PF09294">
    <property type="entry name" value="Interfer-bind"/>
    <property type="match status" value="1"/>
</dbReference>
<dbReference type="Pfam" id="PF01108">
    <property type="entry name" value="Tissue_fac"/>
    <property type="match status" value="1"/>
</dbReference>
<dbReference type="SUPFAM" id="SSF49265">
    <property type="entry name" value="Fibronectin type III"/>
    <property type="match status" value="2"/>
</dbReference>
<dbReference type="PROSITE" id="PS50853">
    <property type="entry name" value="FN3"/>
    <property type="match status" value="1"/>
</dbReference>
<organism>
    <name type="scientific">Homo sapiens</name>
    <name type="common">Human</name>
    <dbReference type="NCBI Taxonomy" id="9606"/>
    <lineage>
        <taxon>Eukaryota</taxon>
        <taxon>Metazoa</taxon>
        <taxon>Chordata</taxon>
        <taxon>Craniata</taxon>
        <taxon>Vertebrata</taxon>
        <taxon>Euteleostomi</taxon>
        <taxon>Mammalia</taxon>
        <taxon>Eutheria</taxon>
        <taxon>Euarchontoglires</taxon>
        <taxon>Primates</taxon>
        <taxon>Haplorrhini</taxon>
        <taxon>Catarrhini</taxon>
        <taxon>Hominidae</taxon>
        <taxon>Homo</taxon>
    </lineage>
</organism>
<evidence type="ECO:0000255" key="1"/>
<evidence type="ECO:0000255" key="2">
    <source>
        <dbReference type="PROSITE-ProRule" id="PRU00316"/>
    </source>
</evidence>
<evidence type="ECO:0000269" key="3">
    <source>
    </source>
</evidence>
<evidence type="ECO:0000269" key="4">
    <source>
    </source>
</evidence>
<evidence type="ECO:0000269" key="5">
    <source>
    </source>
</evidence>
<evidence type="ECO:0000269" key="6">
    <source>
    </source>
</evidence>
<evidence type="ECO:0000269" key="7">
    <source>
    </source>
</evidence>
<evidence type="ECO:0000269" key="8">
    <source>
    </source>
</evidence>
<evidence type="ECO:0000269" key="9">
    <source>
    </source>
</evidence>
<evidence type="ECO:0000269" key="10">
    <source>
    </source>
</evidence>
<evidence type="ECO:0000269" key="11">
    <source>
    </source>
</evidence>
<evidence type="ECO:0000269" key="12">
    <source>
    </source>
</evidence>
<evidence type="ECO:0000269" key="13">
    <source>
    </source>
</evidence>
<evidence type="ECO:0000269" key="14">
    <source ref="2"/>
</evidence>
<evidence type="ECO:0000303" key="15">
    <source>
    </source>
</evidence>
<evidence type="ECO:0000303" key="16">
    <source>
    </source>
</evidence>
<evidence type="ECO:0000305" key="17"/>
<evidence type="ECO:0000312" key="18">
    <source>
        <dbReference type="HGNC" id="HGNC:5440"/>
    </source>
</evidence>
<evidence type="ECO:0007829" key="19">
    <source>
        <dbReference type="PDB" id="5EH1"/>
    </source>
</evidence>
<evidence type="ECO:0007829" key="20">
    <source>
        <dbReference type="PDB" id="6E3K"/>
    </source>
</evidence>
<keyword id="KW-0002">3D-structure</keyword>
<keyword id="KW-1003">Cell membrane</keyword>
<keyword id="KW-0963">Cytoplasm</keyword>
<keyword id="KW-0968">Cytoplasmic vesicle</keyword>
<keyword id="KW-0225">Disease variant</keyword>
<keyword id="KW-1015">Disulfide bond</keyword>
<keyword id="KW-0256">Endoplasmic reticulum</keyword>
<keyword id="KW-0325">Glycoprotein</keyword>
<keyword id="KW-0333">Golgi apparatus</keyword>
<keyword id="KW-0472">Membrane</keyword>
<keyword id="KW-1267">Proteomics identification</keyword>
<keyword id="KW-0675">Receptor</keyword>
<keyword id="KW-1185">Reference proteome</keyword>
<keyword id="KW-0677">Repeat</keyword>
<keyword id="KW-0732">Signal</keyword>
<keyword id="KW-0812">Transmembrane</keyword>
<keyword id="KW-1133">Transmembrane helix</keyword>
<accession>P38484</accession>
<accession>Q9BTL5</accession>
<name>INGR2_HUMAN</name>
<reference key="1">
    <citation type="journal article" date="1994" name="Cell">
        <title>Identification and sequence of an accessory factor required for activation of the human interferon gamma receptor.</title>
        <authorList>
            <person name="Soh J."/>
            <person name="Donnelly R.J."/>
            <person name="Kotenko S."/>
            <person name="Mariano T.M."/>
            <person name="Cook J.R."/>
            <person name="Wang N."/>
            <person name="Emanuel S.L."/>
            <person name="Schwartz B."/>
            <person name="Miki T."/>
            <person name="Pestka S."/>
        </authorList>
    </citation>
    <scope>NUCLEOTIDE SEQUENCE [MRNA]</scope>
    <scope>FUNCTION</scope>
    <scope>VARIANT ARG-64</scope>
    <source>
        <tissue>Lung fibroblast</tissue>
    </source>
</reference>
<reference key="2">
    <citation type="submission" date="2004-06" db="EMBL/GenBank/DDBJ databases">
        <authorList>
            <consortium name="SeattleSNPs variation discovery resource"/>
        </authorList>
    </citation>
    <scope>NUCLEOTIDE SEQUENCE [GENOMIC DNA]</scope>
    <scope>VARIANTS ARG-58; LYS-147 AND GLU-182</scope>
</reference>
<reference key="3">
    <citation type="journal article" date="2004" name="Genome Res.">
        <title>The status, quality, and expansion of the NIH full-length cDNA project: the Mammalian Gene Collection (MGC).</title>
        <authorList>
            <consortium name="The MGC Project Team"/>
        </authorList>
    </citation>
    <scope>NUCLEOTIDE SEQUENCE [LARGE SCALE MRNA]</scope>
    <scope>VARIANT ARG-64</scope>
    <source>
        <tissue>Skin</tissue>
    </source>
</reference>
<reference key="4">
    <citation type="journal article" date="1996" name="J. Biol. Chem.">
        <title>The structure of the gene for the second chain of the human interferon gamma receptor.</title>
        <authorList>
            <person name="Rhee S."/>
            <person name="Ebensperger C."/>
            <person name="Dembic Z."/>
            <person name="Pestka S."/>
        </authorList>
    </citation>
    <scope>NUCLEOTIDE SEQUENCE [GENOMIC DNA] OF 1-24</scope>
</reference>
<reference key="5">
    <citation type="journal article" date="1995" name="J. Biol. Chem.">
        <title>The Jak kinases differentially associate with the alpha and beta (accessory factor) chains of the interferon gamma receptor to form a functional receptor unit capable of activating STAT transcription factors.</title>
        <authorList>
            <person name="Sakatsume M."/>
            <person name="Igarashi K."/>
            <person name="Winestock K.D."/>
            <person name="Garotta G."/>
            <person name="Larner A.C."/>
            <person name="Finbloom D.S."/>
        </authorList>
    </citation>
    <scope>FUNCTION</scope>
    <scope>INTERACTION WITH INGR1 AND JAK2</scope>
</reference>
<reference key="6">
    <citation type="journal article" date="1995" name="J. Biol. Chem.">
        <title>Interaction between the components of the interferon gamma receptor complex.</title>
        <authorList>
            <person name="Kotenko S.V."/>
            <person name="Izotova L.S."/>
            <person name="Pollack B.P."/>
            <person name="Mariano T.M."/>
            <person name="Donnelly R.J."/>
            <person name="Muthukumaran G."/>
            <person name="Cook J.R."/>
            <person name="Garotta G."/>
            <person name="Silvennoinen O."/>
            <person name="Ihle J.N."/>
        </authorList>
    </citation>
    <scope>FUNCTION</scope>
    <scope>INTERACTION WITH JAK2</scope>
</reference>
<reference key="7">
    <citation type="journal article" date="2000" name="J. Immunol.">
        <title>Surface expression of the IFN-gamma R2 chain is regulated by intracellular trafficking in human T lymphocytes.</title>
        <authorList>
            <person name="Rigamonti L."/>
            <person name="Ariotti S."/>
            <person name="Losana G."/>
            <person name="Gradini R."/>
            <person name="Russo M.A."/>
            <person name="Jouanguy E."/>
            <person name="Casanova J.L."/>
            <person name="Forni G."/>
            <person name="Novelli F."/>
        </authorList>
    </citation>
    <scope>SUBCELLULAR LOCATION</scope>
    <scope>TISSUE SPECIFICITY</scope>
</reference>
<reference key="8">
    <citation type="journal article" date="2004" name="J. Immunol.">
        <title>Characterization of a dipeptide motif regulating IFN-gamma receptor 2 plasma membrane accumulation and IFN-gamma responsiveness.</title>
        <authorList>
            <person name="Rosenzweig S.D."/>
            <person name="Schwartz O.M."/>
            <person name="Brown M.R."/>
            <person name="Leto T.L."/>
            <person name="Holland S.M."/>
        </authorList>
    </citation>
    <scope>FUNCTION</scope>
    <scope>SUBCELLULAR LOCATION</scope>
    <scope>MOTIF</scope>
    <scope>MUTAGENESIS OF 274-ARG-GLY-275; LEU-276; ILE-277; 276-LEU-ILE-277 AND 278-LYS-TYR-279</scope>
</reference>
<reference key="9">
    <citation type="journal article" date="2016" name="Acta Crystallogr. D">
        <title>Crystal structure of human interferon-gamma receptor 2 reveals the structural basis for receptor specificity.</title>
        <authorList>
            <person name="Mikulecky P."/>
            <person name="Zahradnik J."/>
            <person name="Kolenko P."/>
            <person name="Cerny J."/>
            <person name="Charnavets T."/>
            <person name="Kolarova L."/>
            <person name="Necasova I."/>
            <person name="Pham P.N."/>
            <person name="Schneider B."/>
        </authorList>
    </citation>
    <scope>X-RAY CRYSTALLOGRAPHY (1.80 ANGSTROMS) OF 28-247</scope>
    <scope>SUBCELLULAR LOCATION</scope>
    <scope>GLYCOSYLATION AT ASN-56; ASN-110; ASN-137; ASN-231; ASN-85 AND ASN-219</scope>
    <scope>MUTAGENESIS OF ASN-110; ASN-137 AND ASN-231</scope>
    <scope>DISULFIDE BOND</scope>
</reference>
<reference key="10">
    <citation type="journal article" date="2000" name="J. Infect. Dis.">
        <title>Partial interferon-gamma receptor signaling chain deficiency in a patient with bacille Calmette-Guerin and Mycobacterium abscessus infection.</title>
        <authorList>
            <person name="Doeffinger R."/>
            <person name="Jouanguy E."/>
            <person name="Dupuis S."/>
            <person name="Fondaneche M.C."/>
            <person name="Stephan J.L."/>
            <person name="Emile J.F."/>
            <person name="Lamhamedi-Cherradi S."/>
            <person name="Altare F."/>
            <person name="Pallier A."/>
            <person name="Barcenas-Morales G."/>
            <person name="Meinl E."/>
            <person name="Krause C."/>
            <person name="Pestka S."/>
            <person name="Schreiber R.D."/>
            <person name="Novelli F."/>
            <person name="Casanova J.L."/>
        </authorList>
    </citation>
    <scope>VARIANT IMD28 CYS-114</scope>
</reference>
<reference key="11">
    <citation type="journal article" date="2005" name="Nat. Genet.">
        <title>Gains of glycosylation comprise an unexpectedly large group of pathogenic mutations.</title>
        <authorList>
            <person name="Vogt G."/>
            <person name="Chapgier A."/>
            <person name="Yang K."/>
            <person name="Chuzhanova N."/>
            <person name="Feinberg J."/>
            <person name="Fieschi C."/>
            <person name="Boisson-Dupuis S."/>
            <person name="Alcais A."/>
            <person name="Filipe-Santos O."/>
            <person name="Bustamante J."/>
            <person name="de Beaucoudrey L."/>
            <person name="Al-Mohsen I."/>
            <person name="Al-Hajjar S."/>
            <person name="Al-Ghonaium A."/>
            <person name="Adimi P."/>
            <person name="Mirsaeidi M."/>
            <person name="Khalilzadeh S."/>
            <person name="Rosenzweig S."/>
            <person name="de la Calle-Martin O."/>
            <person name="Bauer T.R."/>
            <person name="Puck J.M."/>
            <person name="Ochs H.D."/>
            <person name="Furthner D."/>
            <person name="Engelhorn C."/>
            <person name="Belohradsky B."/>
            <person name="Mansouri D."/>
            <person name="Holland S.M."/>
            <person name="Schreiber R.D."/>
            <person name="Abel L."/>
            <person name="Cooper D.N."/>
            <person name="Soudais C."/>
            <person name="Casanova J.-L."/>
        </authorList>
    </citation>
    <scope>VARIANTS IMD28 ASN-168 AND 222-ASN--SER-230 DEL</scope>
    <scope>MUTAGENESIS OF THR-168</scope>
    <scope>CHARACTERIZATION OF VARIANTS IMD28 ASN-168 AND 222-ASN--SER-230 DEL</scope>
    <scope>SUBCELLULAR LOCATION</scope>
</reference>
<reference key="12">
    <citation type="journal article" date="2012" name="J. Infect.">
        <title>Severe disseminated mycobacterial infection in a boy with a novel mutation leading to IFN-gammaR2 deficiency.</title>
        <authorList>
            <person name="Kilic S.S."/>
            <person name="van Wengen A."/>
            <person name="de Paus R.A."/>
            <person name="Celebi S."/>
            <person name="Meziane B."/>
            <person name="Hafizoglu D."/>
            <person name="van Dissel J.T."/>
            <person name="van de Vosse E."/>
        </authorList>
    </citation>
    <scope>VARIANT IMD28 ARG-227</scope>
    <scope>CHARACTERIZATION OF VARIANT IMD28 ARG-227</scope>
</reference>
<reference key="13">
    <citation type="journal article" date="2013" name="Blood">
        <title>Partial IFN-gammaR2 deficiency is due to protein misfolding and can be rescued by inhibitors of glycosylation.</title>
        <authorList>
            <person name="Moncada-Velez M."/>
            <person name="Martinez-Barricarte R."/>
            <person name="Bogunovic D."/>
            <person name="Kong X.F."/>
            <person name="Blancas-Galicia L."/>
            <person name="Tirpan C."/>
            <person name="Aksu G."/>
            <person name="Vincent Q.B."/>
            <person name="Boisson B."/>
            <person name="Itan Y."/>
            <person name="Ramirez-Alejo N."/>
            <person name="Okada S."/>
            <person name="Kreins A.Y."/>
            <person name="Bryant V.L."/>
            <person name="Franco J.L."/>
            <person name="Migaud M."/>
            <person name="Espinosa-Padilla S."/>
            <person name="Yamazaki-Nakashimada M."/>
            <person name="Espinosa-Rosales F."/>
            <person name="Kutukculer N."/>
            <person name="Abel L."/>
            <person name="Bustamante J."/>
            <person name="Vogt G."/>
            <person name="Casanova J.L."/>
            <person name="Boisson-Dupuis S."/>
        </authorList>
    </citation>
    <scope>VARIANTS IMD28 PHE-124 AND ARG-141</scope>
    <scope>CHARACTERIZATION OF VARIANTS IMD28 CYS-114; PHE-124; ARG-141; ASN-168 AND ARG-227</scope>
    <scope>SUBCELLULAR LOCATION</scope>
</reference>
<feature type="signal peptide" evidence="1">
    <location>
        <begin position="1"/>
        <end position="21"/>
    </location>
</feature>
<feature type="chain" id="PRO_0000011011" description="Interferon gamma receptor 2">
    <location>
        <begin position="22"/>
        <end position="337"/>
    </location>
</feature>
<feature type="topological domain" description="Extracellular" evidence="1">
    <location>
        <begin position="28"/>
        <end position="247"/>
    </location>
</feature>
<feature type="transmembrane region" description="Helical" evidence="1">
    <location>
        <begin position="248"/>
        <end position="268"/>
    </location>
</feature>
<feature type="topological domain" description="Cytoplasmic" evidence="1">
    <location>
        <begin position="269"/>
        <end position="337"/>
    </location>
</feature>
<feature type="domain" description="Fibronectin type-III 1" evidence="2">
    <location>
        <begin position="31"/>
        <end position="129"/>
    </location>
</feature>
<feature type="domain" description="Fibronectin type-III 2" evidence="2">
    <location>
        <begin position="142"/>
        <end position="240"/>
    </location>
</feature>
<feature type="short sequence motif" description="Dileucine internalization motif" evidence="5">
    <location>
        <begin position="276"/>
        <end position="277"/>
    </location>
</feature>
<feature type="glycosylation site" description="N-linked (GlcNAc...) asparagine" evidence="10">
    <location>
        <position position="56"/>
    </location>
</feature>
<feature type="glycosylation site" description="N-linked (GlcNAc...) asparagine" evidence="10">
    <location>
        <position position="85"/>
    </location>
</feature>
<feature type="glycosylation site" description="N-linked (GlcNAc...) asparagine" evidence="10">
    <location>
        <position position="110"/>
    </location>
</feature>
<feature type="glycosylation site" description="N-linked (GlcNAc...) asparagine" evidence="10">
    <location>
        <position position="137"/>
    </location>
</feature>
<feature type="glycosylation site" description="N-linked (GlcNAc...) asparagine" evidence="10">
    <location>
        <position position="219"/>
    </location>
</feature>
<feature type="glycosylation site" description="N-linked (GlcNAc...) asparagine" evidence="10">
    <location>
        <position position="231"/>
    </location>
</feature>
<feature type="disulfide bond" evidence="10">
    <location>
        <begin position="86"/>
        <end position="94"/>
    </location>
</feature>
<feature type="disulfide bond" evidence="10">
    <location>
        <begin position="209"/>
        <end position="234"/>
    </location>
</feature>
<feature type="sequence variant" id="VAR_020003" description="In dbSNP:rs4986958." evidence="14">
    <original>T</original>
    <variation>R</variation>
    <location>
        <position position="58"/>
    </location>
</feature>
<feature type="sequence variant" id="VAR_002718" description="In dbSNP:rs9808753." evidence="6 13">
    <original>Q</original>
    <variation>R</variation>
    <location>
        <position position="64"/>
    </location>
</feature>
<feature type="sequence variant" id="VAR_075305" description="In IMD28; encodes misfolded protein with abnormal glycosylation; affects receptor trafficking to the cell surface; reduces response to IFNG; dbSNP:rs1243506079." evidence="4 9">
    <original>R</original>
    <variation>C</variation>
    <location>
        <position position="114"/>
    </location>
</feature>
<feature type="sequence variant" id="VAR_075306" description="In IMD28; encodes misfolded protein with abnormal glycosylation; affects receptor trafficking to the cell surface; reduces response to IFNG." evidence="9">
    <original>S</original>
    <variation>F</variation>
    <location>
        <position position="124"/>
    </location>
</feature>
<feature type="sequence variant" id="VAR_075307" description="In IMD28; encodes misfolded protein with abnormal glycosylation; affects receptor trafficking to the cell surface; reduces response to IFNG; dbSNP:rs1196094724." evidence="9">
    <original>G</original>
    <variation>R</variation>
    <location>
        <position position="141"/>
    </location>
</feature>
<feature type="sequence variant" id="VAR_021383" description="In dbSNP:rs17878639." evidence="14">
    <original>E</original>
    <variation>K</variation>
    <location>
        <position position="147"/>
    </location>
</feature>
<feature type="sequence variant" id="VAR_023281" description="In IMD28; does not affect receptor trafficking to the cell surface; loss of function due to gain of N-glycosylation; dbSNP:rs74315444." evidence="7 9">
    <original>T</original>
    <variation>N</variation>
    <location>
        <position position="168"/>
    </location>
</feature>
<feature type="sequence variant" id="VAR_021384" description="In dbSNP:rs17878711." evidence="14">
    <original>K</original>
    <variation>E</variation>
    <location>
        <position position="182"/>
    </location>
</feature>
<feature type="sequence variant" id="VAR_023282" description="In IMD28; affects receptor trafficking to the cell surface." evidence="7">
    <location>
        <begin position="222"/>
        <end position="230"/>
    </location>
</feature>
<feature type="sequence variant" id="VAR_075308" description="In IMD28; encodes misfolded protein with abnormal glycosylation; affects receptor trafficking to the cell surface; reduces response to IFNG." evidence="8 9">
    <original>G</original>
    <variation>R</variation>
    <location>
        <position position="227"/>
    </location>
</feature>
<feature type="mutagenesis site" description="Complete inhibition of transport to the cell membrane." evidence="10">
    <original>N</original>
    <variation>Q</variation>
    <location>
        <position position="110"/>
    </location>
</feature>
<feature type="mutagenesis site" description="Complete inhibition of transport to the cell membrane." evidence="10">
    <original>N</original>
    <variation>Q</variation>
    <location>
        <position position="137"/>
    </location>
</feature>
<feature type="mutagenesis site" description="Does not affect function." evidence="7">
    <original>T</original>
    <variation>A</variation>
    <variation>Q</variation>
    <location>
        <position position="168"/>
    </location>
</feature>
<feature type="mutagenesis site" description="Complete inhibition of transport to the cell membrane." evidence="10">
    <original>N</original>
    <variation>Q</variation>
    <location>
        <position position="231"/>
    </location>
</feature>
<feature type="mutagenesis site" description="Leads to overaccumulation on the cell membrane." evidence="5">
    <location>
        <begin position="274"/>
        <end position="275"/>
    </location>
</feature>
<feature type="mutagenesis site" description="Leads to overaccumulation on the cell membrane. Enhances function." evidence="5">
    <original>LI</original>
    <variation>AA</variation>
    <location>
        <begin position="276"/>
        <end position="277"/>
    </location>
</feature>
<feature type="mutagenesis site" description="Leads to overaccumulation on the cell membrane. Enhances function." evidence="5">
    <location>
        <begin position="276"/>
        <end position="277"/>
    </location>
</feature>
<feature type="mutagenesis site" description="Leads to small increase in accumulation on the cell membrane." evidence="5">
    <original>L</original>
    <variation>A</variation>
    <location>
        <position position="276"/>
    </location>
</feature>
<feature type="mutagenesis site" description="Does not affect accumulation on the cell membrane." evidence="5">
    <original>I</original>
    <variation>A</variation>
    <location>
        <position position="277"/>
    </location>
</feature>
<feature type="mutagenesis site" description="Does not affect accumulation on the cell membrane." evidence="5">
    <location>
        <begin position="278"/>
        <end position="279"/>
    </location>
</feature>
<feature type="strand" evidence="19">
    <location>
        <begin position="37"/>
        <end position="41"/>
    </location>
</feature>
<feature type="strand" evidence="19">
    <location>
        <begin position="44"/>
        <end position="48"/>
    </location>
</feature>
<feature type="strand" evidence="19">
    <location>
        <begin position="62"/>
        <end position="68"/>
    </location>
</feature>
<feature type="helix" evidence="19">
    <location>
        <begin position="79"/>
        <end position="82"/>
    </location>
</feature>
<feature type="strand" evidence="19">
    <location>
        <begin position="87"/>
        <end position="89"/>
    </location>
</feature>
<feature type="strand" evidence="19">
    <location>
        <begin position="91"/>
        <end position="95"/>
    </location>
</feature>
<feature type="strand" evidence="20">
    <location>
        <begin position="98"/>
        <end position="100"/>
    </location>
</feature>
<feature type="strand" evidence="19">
    <location>
        <begin position="109"/>
        <end position="119"/>
    </location>
</feature>
<feature type="strand" evidence="19">
    <location>
        <begin position="122"/>
        <end position="124"/>
    </location>
</feature>
<feature type="helix" evidence="19">
    <location>
        <begin position="134"/>
        <end position="137"/>
    </location>
</feature>
<feature type="strand" evidence="19">
    <location>
        <begin position="144"/>
        <end position="151"/>
    </location>
</feature>
<feature type="strand" evidence="19">
    <location>
        <begin position="154"/>
        <end position="160"/>
    </location>
</feature>
<feature type="turn" evidence="19">
    <location>
        <begin position="168"/>
        <end position="170"/>
    </location>
</feature>
<feature type="strand" evidence="19">
    <location>
        <begin position="171"/>
        <end position="181"/>
    </location>
</feature>
<feature type="strand" evidence="19">
    <location>
        <begin position="187"/>
        <end position="199"/>
    </location>
</feature>
<feature type="strand" evidence="19">
    <location>
        <begin position="207"/>
        <end position="218"/>
    </location>
</feature>
<feature type="turn" evidence="20">
    <location>
        <begin position="219"/>
        <end position="221"/>
    </location>
</feature>
<feature type="strand" evidence="19">
    <location>
        <begin position="224"/>
        <end position="226"/>
    </location>
</feature>
<feature type="strand" evidence="19">
    <location>
        <begin position="233"/>
        <end position="236"/>
    </location>
</feature>
<comment type="function">
    <text evidence="5 11 12 13">Associates with IFNGR1 to form a receptor for the cytokine interferon gamma (IFNG) (PubMed:7615558, PubMed:7673114, PubMed:8124716). Ligand binding stimulates activation of the JAK/STAT signaling pathway (PubMed:15356148, PubMed:7673114, PubMed:8124716). Required for signal transduction in contrast to other receptor subunit responsible for ligand binding (PubMed:7673114).</text>
</comment>
<comment type="subunit">
    <text evidence="11 12">Heterodimer with IFNGR1, to form the IFNG receptor complex (PubMed:7615558). Interacts (via intracellular domain) with JAK2 (PubMed:7615558, PubMed:7673114).</text>
</comment>
<comment type="interaction">
    <interactant intactId="EBI-3905457">
        <id>P38484</id>
    </interactant>
    <interactant intactId="EBI-10827839">
        <id>Q15848</id>
        <label>ADIPOQ</label>
    </interactant>
    <organismsDiffer>false</organismsDiffer>
    <experiments>3</experiments>
</comment>
<comment type="interaction">
    <interactant intactId="EBI-3905457">
        <id>P38484</id>
    </interactant>
    <interactant intactId="EBI-749464">
        <id>Q12983</id>
        <label>BNIP3</label>
    </interactant>
    <organismsDiffer>false</organismsDiffer>
    <experiments>3</experiments>
</comment>
<comment type="interaction">
    <interactant intactId="EBI-3905457">
        <id>P38484</id>
    </interactant>
    <interactant intactId="EBI-12244618">
        <id>Q6PL45-2</id>
        <label>BRICD5</label>
    </interactant>
    <organismsDiffer>false</organismsDiffer>
    <experiments>3</experiments>
</comment>
<comment type="interaction">
    <interactant intactId="EBI-3905457">
        <id>P38484</id>
    </interactant>
    <interactant intactId="EBI-17442596">
        <id>Q6UX41-6</id>
        <label>BTNL8</label>
    </interactant>
    <organismsDiffer>false</organismsDiffer>
    <experiments>3</experiments>
</comment>
<comment type="interaction">
    <interactant intactId="EBI-3905457">
        <id>P38484</id>
    </interactant>
    <interactant intactId="EBI-14259393">
        <id>Q8IX05</id>
        <label>CD302</label>
    </interactant>
    <organismsDiffer>false</organismsDiffer>
    <experiments>3</experiments>
</comment>
<comment type="interaction">
    <interactant intactId="EBI-3905457">
        <id>P38484</id>
    </interactant>
    <interactant intactId="EBI-12256978">
        <id>Q8N6F1-2</id>
        <label>CLDN19</label>
    </interactant>
    <organismsDiffer>false</organismsDiffer>
    <experiments>3</experiments>
</comment>
<comment type="interaction">
    <interactant intactId="EBI-3905457">
        <id>P38484</id>
    </interactant>
    <interactant intactId="EBI-11989440">
        <id>Q9BXN2-6</id>
        <label>CLEC7A</label>
    </interactant>
    <organismsDiffer>false</organismsDiffer>
    <experiments>3</experiments>
</comment>
<comment type="interaction">
    <interactant intactId="EBI-3905457">
        <id>P38484</id>
    </interactant>
    <interactant intactId="EBI-3911467">
        <id>Q07325</id>
        <label>CXCL9</label>
    </interactant>
    <organismsDiffer>false</organismsDiffer>
    <experiments>3</experiments>
</comment>
<comment type="interaction">
    <interactant intactId="EBI-3905457">
        <id>P38484</id>
    </interactant>
    <interactant intactId="EBI-3907816">
        <id>P54852</id>
        <label>EMP3</label>
    </interactant>
    <organismsDiffer>false</organismsDiffer>
    <experiments>3</experiments>
</comment>
<comment type="interaction">
    <interactant intactId="EBI-3905457">
        <id>P38484</id>
    </interactant>
    <interactant intactId="EBI-12279764">
        <id>O75355-2</id>
        <label>ENTPD3</label>
    </interactant>
    <organismsDiffer>false</organismsDiffer>
    <experiments>3</experiments>
</comment>
<comment type="interaction">
    <interactant intactId="EBI-3905457">
        <id>P38484</id>
    </interactant>
    <interactant intactId="EBI-10976398">
        <id>Q7Z2K6</id>
        <label>ERMP1</label>
    </interactant>
    <organismsDiffer>false</organismsDiffer>
    <experiments>3</experiments>
</comment>
<comment type="interaction">
    <interactant intactId="EBI-3905457">
        <id>P38484</id>
    </interactant>
    <interactant intactId="EBI-6166686">
        <id>Q96F15</id>
        <label>GIMAP5</label>
    </interactant>
    <organismsDiffer>false</organismsDiffer>
    <experiments>3</experiments>
</comment>
<comment type="interaction">
    <interactant intactId="EBI-3905457">
        <id>P38484</id>
    </interactant>
    <interactant intactId="EBI-8503746">
        <id>Q9Y5U4</id>
        <label>INSIG2</label>
    </interactant>
    <organismsDiffer>false</organismsDiffer>
    <experiments>3</experiments>
</comment>
<comment type="interaction">
    <interactant intactId="EBI-3905457">
        <id>P38484</id>
    </interactant>
    <interactant intactId="EBI-10266796">
        <id>Q8N5M9</id>
        <label>JAGN1</label>
    </interactant>
    <organismsDiffer>false</organismsDiffer>
    <experiments>3</experiments>
</comment>
<comment type="interaction">
    <interactant intactId="EBI-3905457">
        <id>P38484</id>
    </interactant>
    <interactant intactId="EBI-2845982">
        <id>Q01453</id>
        <label>PMP22</label>
    </interactant>
    <organismsDiffer>false</organismsDiffer>
    <experiments>3</experiments>
</comment>
<comment type="interaction">
    <interactant intactId="EBI-3905457">
        <id>P38484</id>
    </interactant>
    <interactant intactId="EBI-10244780">
        <id>Q5QGT7</id>
        <label>RTP2</label>
    </interactant>
    <organismsDiffer>false</organismsDiffer>
    <experiments>3</experiments>
</comment>
<comment type="interaction">
    <interactant intactId="EBI-3905457">
        <id>P38484</id>
    </interactant>
    <interactant intactId="EBI-1058865">
        <id>O75396</id>
        <label>SEC22B</label>
    </interactant>
    <organismsDiffer>false</organismsDiffer>
    <experiments>3</experiments>
</comment>
<comment type="interaction">
    <interactant intactId="EBI-3905457">
        <id>P38484</id>
    </interactant>
    <interactant intactId="EBI-4402330">
        <id>O95562</id>
        <label>SFT2D2</label>
    </interactant>
    <organismsDiffer>false</organismsDiffer>
    <experiments>3</experiments>
</comment>
<comment type="interaction">
    <interactant intactId="EBI-3905457">
        <id>P38484</id>
    </interactant>
    <interactant intactId="EBI-10197617">
        <id>P11686</id>
        <label>SFTPC</label>
    </interactant>
    <organismsDiffer>false</organismsDiffer>
    <experiments>3</experiments>
</comment>
<comment type="interaction">
    <interactant intactId="EBI-3905457">
        <id>P38484</id>
    </interactant>
    <interactant intactId="EBI-12904614">
        <id>Q9NWF4</id>
        <label>SLC52A1</label>
    </interactant>
    <organismsDiffer>false</organismsDiffer>
    <experiments>3</experiments>
</comment>
<comment type="interaction">
    <interactant intactId="EBI-3905457">
        <id>P38484</id>
    </interactant>
    <interactant intactId="EBI-741850">
        <id>Q9BZL3</id>
        <label>SMIM3</label>
    </interactant>
    <organismsDiffer>false</organismsDiffer>
    <experiments>3</experiments>
</comment>
<comment type="interaction">
    <interactant intactId="EBI-3905457">
        <id>P38484</id>
    </interactant>
    <interactant intactId="EBI-12200293">
        <id>P0DN84</id>
        <label>STRIT1</label>
    </interactant>
    <organismsDiffer>false</organismsDiffer>
    <experiments>3</experiments>
</comment>
<comment type="interaction">
    <interactant intactId="EBI-3905457">
        <id>P38484</id>
    </interactant>
    <interactant intactId="EBI-10171534">
        <id>A0PK00</id>
        <label>TMEM120B</label>
    </interactant>
    <organismsDiffer>false</organismsDiffer>
    <experiments>3</experiments>
</comment>
<comment type="interaction">
    <interactant intactId="EBI-3905457">
        <id>P38484</id>
    </interactant>
    <interactant intactId="EBI-2844246">
        <id>Q9NV12</id>
        <label>TMEM140</label>
    </interactant>
    <organismsDiffer>false</organismsDiffer>
    <experiments>3</experiments>
</comment>
<comment type="interaction">
    <interactant intactId="EBI-3905457">
        <id>P38484</id>
    </interactant>
    <interactant intactId="EBI-10265825">
        <id>Q8N511</id>
        <label>TMEM199</label>
    </interactant>
    <organismsDiffer>false</organismsDiffer>
    <experiments>3</experiments>
</comment>
<comment type="interaction">
    <interactant intactId="EBI-3905457">
        <id>P38484</id>
    </interactant>
    <interactant intactId="EBI-10173151">
        <id>A2RU14</id>
        <label>TMEM218</label>
    </interactant>
    <organismsDiffer>false</organismsDiffer>
    <experiments>3</experiments>
</comment>
<comment type="interaction">
    <interactant intactId="EBI-3905457">
        <id>P38484</id>
    </interactant>
    <interactant intactId="EBI-11956809">
        <id>Q8TBM7</id>
        <label>TMEM254</label>
    </interactant>
    <organismsDiffer>false</organismsDiffer>
    <experiments>3</experiments>
</comment>
<comment type="interaction">
    <interactant intactId="EBI-3905457">
        <id>P38484</id>
    </interactant>
    <interactant intactId="EBI-2852148">
        <id>Q9H2L4</id>
        <label>TMEM60</label>
    </interactant>
    <organismsDiffer>false</organismsDiffer>
    <experiments>3</experiments>
</comment>
<comment type="interaction">
    <interactant intactId="EBI-3905457">
        <id>P38484</id>
    </interactant>
    <interactant intactId="EBI-12111910">
        <id>Q5BJF2</id>
        <label>TMEM97</label>
    </interactant>
    <organismsDiffer>false</organismsDiffer>
    <experiments>3</experiments>
</comment>
<comment type="interaction">
    <interactant intactId="EBI-3905457">
        <id>P38484</id>
    </interactant>
    <interactant intactId="EBI-16746122">
        <id>Q9NSU2-1</id>
        <label>TREX1</label>
    </interactant>
    <organismsDiffer>false</organismsDiffer>
    <experiments>3</experiments>
</comment>
<comment type="interaction">
    <interactant intactId="EBI-3905457">
        <id>P38484</id>
    </interactant>
    <interactant intactId="EBI-3914288">
        <id>O60636</id>
        <label>TSPAN2</label>
    </interactant>
    <organismsDiffer>false</organismsDiffer>
    <experiments>3</experiments>
</comment>
<comment type="interaction">
    <interactant intactId="EBI-3905457">
        <id>P38484</id>
    </interactant>
    <interactant intactId="EBI-11988865">
        <id>A5PKU2</id>
        <label>TUSC5</label>
    </interactant>
    <organismsDiffer>false</organismsDiffer>
    <experiments>3</experiments>
</comment>
<comment type="interaction">
    <interactant intactId="EBI-3905457">
        <id>P38484</id>
    </interactant>
    <interactant intactId="EBI-7601760">
        <id>Q53HI1</id>
        <label>UNC50</label>
    </interactant>
    <organismsDiffer>false</organismsDiffer>
    <experiments>3</experiments>
</comment>
<comment type="interaction">
    <interactant intactId="EBI-3905457">
        <id>P38484</id>
    </interactant>
    <interactant intactId="EBI-10254561">
        <id>Q6UX98</id>
        <label>ZDHHC24</label>
    </interactant>
    <organismsDiffer>false</organismsDiffer>
    <experiments>3</experiments>
</comment>
<comment type="subcellular location">
    <subcellularLocation>
        <location evidence="5 7 10">Cell membrane</location>
        <topology evidence="1">Single-pass type I membrane protein</topology>
    </subcellularLocation>
    <subcellularLocation>
        <location evidence="3">Cytoplasmic vesicle membrane</location>
        <topology evidence="1">Single-pass type I membrane protein</topology>
    </subcellularLocation>
    <subcellularLocation>
        <location evidence="9">Golgi apparatus membrane</location>
        <topology evidence="1">Single-pass type I membrane protein</topology>
    </subcellularLocation>
    <subcellularLocation>
        <location evidence="9">Endoplasmic reticulum membrane</location>
        <topology evidence="1">Single-pass type I membrane protein</topology>
    </subcellularLocation>
    <subcellularLocation>
        <location evidence="3">Cytoplasm</location>
    </subcellularLocation>
    <text evidence="3 5">Has low cell surface expression and high cytoplasmic expression in T cells. The bias towards cytoplasmic expression may be due to ligand-independent receptor internalization and recycling.</text>
</comment>
<comment type="tissue specificity">
    <text evidence="3">Expressed in T-cells (at protein level).</text>
</comment>
<comment type="disease" evidence="4 7 8 9">
    <disease id="DI-04221">
        <name>Immunodeficiency 28</name>
        <acronym>IMD28</acronym>
        <description>A form of Mendelian susceptibility to mycobacterial disease, a rare condition caused by impairment of interferon-gamma mediated immunity. It is characterized by predisposition to illness caused by moderately virulent mycobacterial species, such as Bacillus Calmette-Guerin (BCG) vaccine, environmental non-tuberculous mycobacteria, and by the more virulent Mycobacterium tuberculosis. Other microorganisms rarely cause severe clinical disease in individuals with susceptibility to mycobacterial infections, with the exception of Salmonella which infects less than 50% of these individuals. Clinical outcome severity depends on the degree of impairment of interferon-gamma mediated immunity. Some patients die of overwhelming mycobacterial disease with lepromatous-like lesions in early childhood, whereas others develop, later in life, disseminated but curable infections with tuberculoid granulomas. IMD28 is an autosomal recessive disease that manifests early in life, with severe, often fatal, infection.</description>
        <dbReference type="MIM" id="614889"/>
    </disease>
    <text>The disease is caused by variants affecting the gene represented in this entry.</text>
</comment>
<comment type="similarity">
    <text evidence="17">Belongs to the type II cytokine receptor family.</text>
</comment>
<comment type="online information" name="IFNGR2base">
    <link uri="https://databases.lovd.nl/shared/genes/IFNGR2"/>
    <text>IFNGR2 mutation db</text>
</comment>
<protein>
    <recommendedName>
        <fullName evidence="18">Interferon gamma receptor 2</fullName>
        <shortName>IFN-gamma receptor 2</shortName>
        <shortName>IFN-gamma-R2</shortName>
    </recommendedName>
    <alternativeName>
        <fullName evidence="16">Interferon gamma receptor accessory factor 1</fullName>
        <shortName evidence="16">AF-1</shortName>
    </alternativeName>
    <alternativeName>
        <fullName evidence="15">Interferon gamma receptor beta-chain</fullName>
        <shortName evidence="15">IFN-gamma-R-beta</shortName>
    </alternativeName>
    <alternativeName>
        <fullName evidence="18">Interferon gamma transducer 1</fullName>
    </alternativeName>
</protein>
<sequence>MRPTLLWSLLLLLGVFAAAAAAPPDPLSQLPAPQHPKIRLYNAEQVLSWEPVALSNSTRPVVYQVQFKYTDSKWFTADIMSIGVNCTQITATECDFTAASPSAGFPMDFNVTLRLRAELGALHSAWVTMPWFQHYRNVTVGPPENIEVTPGEGSLIIRFSSPFDIADTSTAFFCYYVHYWEKGGIQQVKGPFRSNSISLDNLKPSRVYCLQVQAQLLWNKSNIFRVGHLSNISCYETMADASTELQQVILISVGTFSLLSVLAGACFFLVLKYRGLIKYWFHTPPSIPLQIEEYLKDPTQPILEALDKDSSPKDDVWDSVSIISFPEKEQEDVLQTL</sequence>
<gene>
    <name evidence="18" type="primary">IFNGR2</name>
    <name evidence="18" type="synonym">IFNGT1</name>
</gene>
<proteinExistence type="evidence at protein level"/>